<keyword id="KW-0963">Cytoplasm</keyword>
<keyword id="KW-0227">DNA damage</keyword>
<keyword id="KW-0233">DNA recombination</keyword>
<keyword id="KW-0234">DNA repair</keyword>
<keyword id="KW-0238">DNA-binding</keyword>
<keyword id="KW-0255">Endonuclease</keyword>
<keyword id="KW-0378">Hydrolase</keyword>
<keyword id="KW-0460">Magnesium</keyword>
<keyword id="KW-0479">Metal-binding</keyword>
<keyword id="KW-0540">Nuclease</keyword>
<proteinExistence type="inferred from homology"/>
<comment type="function">
    <text evidence="1">The RuvA-RuvB-RuvC complex processes Holliday junction (HJ) DNA during genetic recombination and DNA repair. Endonuclease that resolves HJ intermediates. Cleaves cruciform DNA by making single-stranded nicks across the HJ at symmetrical positions within the homologous arms, yielding a 5'-phosphate and a 3'-hydroxyl group; requires a central core of homology in the junction. The consensus cleavage sequence is 5'-(A/T)TT(C/G)-3'. Cleavage occurs on the 3'-side of the TT dinucleotide at the point of strand exchange. HJ branch migration catalyzed by RuvA-RuvB allows RuvC to scan DNA until it finds its consensus sequence, where it cleaves and resolves the cruciform DNA.</text>
</comment>
<comment type="catalytic activity">
    <reaction evidence="1">
        <text>Endonucleolytic cleavage at a junction such as a reciprocal single-stranded crossover between two homologous DNA duplexes (Holliday junction).</text>
        <dbReference type="EC" id="3.1.21.10"/>
    </reaction>
</comment>
<comment type="cofactor">
    <cofactor evidence="1">
        <name>Mg(2+)</name>
        <dbReference type="ChEBI" id="CHEBI:18420"/>
    </cofactor>
    <text evidence="1">Binds 2 Mg(2+) ion per subunit.</text>
</comment>
<comment type="subunit">
    <text evidence="1">Homodimer which binds Holliday junction (HJ) DNA. The HJ becomes 2-fold symmetrical on binding to RuvC with unstacked arms; it has a different conformation from HJ DNA in complex with RuvA. In the full resolvosome a probable DNA-RuvA(4)-RuvB(12)-RuvC(2) complex forms which resolves the HJ.</text>
</comment>
<comment type="subcellular location">
    <subcellularLocation>
        <location evidence="1">Cytoplasm</location>
    </subcellularLocation>
</comment>
<comment type="similarity">
    <text evidence="1">Belongs to the RuvC family.</text>
</comment>
<accession>A8FP40</accession>
<organism>
    <name type="scientific">Campylobacter jejuni subsp. jejuni serotype O:6 (strain 81116 / NCTC 11828)</name>
    <dbReference type="NCBI Taxonomy" id="407148"/>
    <lineage>
        <taxon>Bacteria</taxon>
        <taxon>Pseudomonadati</taxon>
        <taxon>Campylobacterota</taxon>
        <taxon>Epsilonproteobacteria</taxon>
        <taxon>Campylobacterales</taxon>
        <taxon>Campylobacteraceae</taxon>
        <taxon>Campylobacter</taxon>
    </lineage>
</organism>
<sequence>MKILGIDPGSRNCGYAIIEANKGKNILIEAGLIKIKPNTLQYQITELCEGLDLIFKNHSFDEVAIEDIFFAYNPKTVLKLAQFRGALSLKILQIHGDFAEYTPLQVKKAVTGKAKATKEQVAFMVKRLLGLSKDIKPLDITDAIAVALTHAANLRVRV</sequence>
<reference key="1">
    <citation type="journal article" date="2007" name="J. Bacteriol.">
        <title>The complete genome sequence of Campylobacter jejuni strain 81116 (NCTC11828).</title>
        <authorList>
            <person name="Pearson B.M."/>
            <person name="Gaskin D.J.H."/>
            <person name="Segers R.P.A.M."/>
            <person name="Wells J.M."/>
            <person name="Nuijten P.J.M."/>
            <person name="van Vliet A.H.M."/>
        </authorList>
    </citation>
    <scope>NUCLEOTIDE SEQUENCE [LARGE SCALE GENOMIC DNA]</scope>
    <source>
        <strain>81116 / NCTC 11828</strain>
    </source>
</reference>
<dbReference type="EC" id="3.1.21.10" evidence="1"/>
<dbReference type="EMBL" id="CP000814">
    <property type="protein sequence ID" value="ABV53227.1"/>
    <property type="molecule type" value="Genomic_DNA"/>
</dbReference>
<dbReference type="RefSeq" id="WP_012006804.1">
    <property type="nucleotide sequence ID" value="NC_009839.1"/>
</dbReference>
<dbReference type="SMR" id="A8FP40"/>
<dbReference type="KEGG" id="cju:C8J_1630"/>
<dbReference type="HOGENOM" id="CLU_091257_3_0_7"/>
<dbReference type="GO" id="GO:0005737">
    <property type="term" value="C:cytoplasm"/>
    <property type="evidence" value="ECO:0007669"/>
    <property type="project" value="UniProtKB-SubCell"/>
</dbReference>
<dbReference type="GO" id="GO:0048476">
    <property type="term" value="C:Holliday junction resolvase complex"/>
    <property type="evidence" value="ECO:0007669"/>
    <property type="project" value="UniProtKB-UniRule"/>
</dbReference>
<dbReference type="GO" id="GO:0008821">
    <property type="term" value="F:crossover junction DNA endonuclease activity"/>
    <property type="evidence" value="ECO:0007669"/>
    <property type="project" value="UniProtKB-UniRule"/>
</dbReference>
<dbReference type="GO" id="GO:0003677">
    <property type="term" value="F:DNA binding"/>
    <property type="evidence" value="ECO:0007669"/>
    <property type="project" value="UniProtKB-KW"/>
</dbReference>
<dbReference type="GO" id="GO:0000287">
    <property type="term" value="F:magnesium ion binding"/>
    <property type="evidence" value="ECO:0007669"/>
    <property type="project" value="UniProtKB-UniRule"/>
</dbReference>
<dbReference type="GO" id="GO:0006310">
    <property type="term" value="P:DNA recombination"/>
    <property type="evidence" value="ECO:0007669"/>
    <property type="project" value="UniProtKB-UniRule"/>
</dbReference>
<dbReference type="GO" id="GO:0006281">
    <property type="term" value="P:DNA repair"/>
    <property type="evidence" value="ECO:0007669"/>
    <property type="project" value="UniProtKB-UniRule"/>
</dbReference>
<dbReference type="CDD" id="cd16962">
    <property type="entry name" value="RuvC"/>
    <property type="match status" value="1"/>
</dbReference>
<dbReference type="FunFam" id="3.30.420.10:FF:000002">
    <property type="entry name" value="Crossover junction endodeoxyribonuclease RuvC"/>
    <property type="match status" value="1"/>
</dbReference>
<dbReference type="Gene3D" id="3.30.420.10">
    <property type="entry name" value="Ribonuclease H-like superfamily/Ribonuclease H"/>
    <property type="match status" value="1"/>
</dbReference>
<dbReference type="HAMAP" id="MF_00034">
    <property type="entry name" value="RuvC"/>
    <property type="match status" value="1"/>
</dbReference>
<dbReference type="InterPro" id="IPR012337">
    <property type="entry name" value="RNaseH-like_sf"/>
</dbReference>
<dbReference type="InterPro" id="IPR036397">
    <property type="entry name" value="RNaseH_sf"/>
</dbReference>
<dbReference type="InterPro" id="IPR020563">
    <property type="entry name" value="X-over_junc_endoDNase_Mg_BS"/>
</dbReference>
<dbReference type="InterPro" id="IPR002176">
    <property type="entry name" value="X-over_junc_endoDNase_RuvC"/>
</dbReference>
<dbReference type="NCBIfam" id="TIGR00228">
    <property type="entry name" value="ruvC"/>
    <property type="match status" value="1"/>
</dbReference>
<dbReference type="PANTHER" id="PTHR30194">
    <property type="entry name" value="CROSSOVER JUNCTION ENDODEOXYRIBONUCLEASE RUVC"/>
    <property type="match status" value="1"/>
</dbReference>
<dbReference type="PANTHER" id="PTHR30194:SF3">
    <property type="entry name" value="CROSSOVER JUNCTION ENDODEOXYRIBONUCLEASE RUVC"/>
    <property type="match status" value="1"/>
</dbReference>
<dbReference type="Pfam" id="PF02075">
    <property type="entry name" value="RuvC"/>
    <property type="match status" value="1"/>
</dbReference>
<dbReference type="PRINTS" id="PR00696">
    <property type="entry name" value="RSOLVASERUVC"/>
</dbReference>
<dbReference type="SUPFAM" id="SSF53098">
    <property type="entry name" value="Ribonuclease H-like"/>
    <property type="match status" value="1"/>
</dbReference>
<dbReference type="PROSITE" id="PS01321">
    <property type="entry name" value="RUVC"/>
    <property type="match status" value="1"/>
</dbReference>
<gene>
    <name evidence="1" type="primary">ruvC</name>
    <name type="ordered locus">C8J_1630</name>
</gene>
<evidence type="ECO:0000255" key="1">
    <source>
        <dbReference type="HAMAP-Rule" id="MF_00034"/>
    </source>
</evidence>
<protein>
    <recommendedName>
        <fullName evidence="1">Crossover junction endodeoxyribonuclease RuvC</fullName>
        <ecNumber evidence="1">3.1.21.10</ecNumber>
    </recommendedName>
    <alternativeName>
        <fullName evidence="1">Holliday junction nuclease RuvC</fullName>
    </alternativeName>
    <alternativeName>
        <fullName evidence="1">Holliday junction resolvase RuvC</fullName>
    </alternativeName>
</protein>
<name>RUVC_CAMJ8</name>
<feature type="chain" id="PRO_0000332413" description="Crossover junction endodeoxyribonuclease RuvC">
    <location>
        <begin position="1"/>
        <end position="158"/>
    </location>
</feature>
<feature type="active site" evidence="1">
    <location>
        <position position="7"/>
    </location>
</feature>
<feature type="active site" evidence="1">
    <location>
        <position position="66"/>
    </location>
</feature>
<feature type="active site" evidence="1">
    <location>
        <position position="139"/>
    </location>
</feature>
<feature type="binding site" evidence="1">
    <location>
        <position position="7"/>
    </location>
    <ligand>
        <name>Mg(2+)</name>
        <dbReference type="ChEBI" id="CHEBI:18420"/>
        <label>1</label>
    </ligand>
</feature>
<feature type="binding site" evidence="1">
    <location>
        <position position="66"/>
    </location>
    <ligand>
        <name>Mg(2+)</name>
        <dbReference type="ChEBI" id="CHEBI:18420"/>
        <label>2</label>
    </ligand>
</feature>
<feature type="binding site" evidence="1">
    <location>
        <position position="139"/>
    </location>
    <ligand>
        <name>Mg(2+)</name>
        <dbReference type="ChEBI" id="CHEBI:18420"/>
        <label>1</label>
    </ligand>
</feature>